<protein>
    <recommendedName>
        <fullName>Probable lysosomal cobalamin transporter</fullName>
    </recommendedName>
</protein>
<reference key="1">
    <citation type="journal article" date="2008" name="Genome Biol.">
        <title>The genome sequence of the model ascomycete fungus Podospora anserina.</title>
        <authorList>
            <person name="Espagne E."/>
            <person name="Lespinet O."/>
            <person name="Malagnac F."/>
            <person name="Da Silva C."/>
            <person name="Jaillon O."/>
            <person name="Porcel B.M."/>
            <person name="Couloux A."/>
            <person name="Aury J.-M."/>
            <person name="Segurens B."/>
            <person name="Poulain J."/>
            <person name="Anthouard V."/>
            <person name="Grossetete S."/>
            <person name="Khalili H."/>
            <person name="Coppin E."/>
            <person name="Dequard-Chablat M."/>
            <person name="Picard M."/>
            <person name="Contamine V."/>
            <person name="Arnaise S."/>
            <person name="Bourdais A."/>
            <person name="Berteaux-Lecellier V."/>
            <person name="Gautheret D."/>
            <person name="de Vries R.P."/>
            <person name="Battaglia E."/>
            <person name="Coutinho P.M."/>
            <person name="Danchin E.G.J."/>
            <person name="Henrissat B."/>
            <person name="El Khoury R."/>
            <person name="Sainsard-Chanet A."/>
            <person name="Boivin A."/>
            <person name="Pinan-Lucarre B."/>
            <person name="Sellem C.H."/>
            <person name="Debuchy R."/>
            <person name="Wincker P."/>
            <person name="Weissenbach J."/>
            <person name="Silar P."/>
        </authorList>
    </citation>
    <scope>NUCLEOTIDE SEQUENCE [LARGE SCALE GENOMIC DNA]</scope>
    <source>
        <strain>S / ATCC MYA-4624 / DSM 980 / FGSC 10383</strain>
    </source>
</reference>
<reference key="2">
    <citation type="journal article" date="2014" name="Genetics">
        <title>Maintaining two mating types: Structure of the mating type locus and its role in heterokaryosis in Podospora anserina.</title>
        <authorList>
            <person name="Grognet P."/>
            <person name="Bidard F."/>
            <person name="Kuchly C."/>
            <person name="Tong L.C.H."/>
            <person name="Coppin E."/>
            <person name="Benkhali J.A."/>
            <person name="Couloux A."/>
            <person name="Wincker P."/>
            <person name="Debuchy R."/>
            <person name="Silar P."/>
        </authorList>
    </citation>
    <scope>GENOME REANNOTATION</scope>
    <source>
        <strain>S / ATCC MYA-4624 / DSM 980 / FGSC 10383</strain>
    </source>
</reference>
<sequence>MLASAGLLQTSLIWVAYAVAVALVLLVAIITTFTWQSPHERSVTVSIVAIVSLTSLLATVFLLPVDIALVSSTASAHLGAKKDWATPERIDGILLTLKVVYYTLYSFDALLCLIVIPFAYFWYEEYDEVEEEEGTSGAGARFWKAAKYTLGFVFLVLILFLLGFFVPAAGSGNGKHLDLDYFKRLLAANKGEKALTFGVGLLITLGTFLYTLYTGAGLALLPVSLIKSAPSISAPQLSATIATDLEHNRELQRQIEMRNAGRPDGISQKDRRELDALLREERTLVRRERLAAETRGDGRSGVFRAWTKIQAVFRPLKLLGGILLLLLSILVWASMLITGIDKAANSICKEHCGYILGHINVFQPVNWIFVQSAKAFPVDYILMALLVLFFFGSSITGIATIGIRFLWVRVFQIKKGRTSPQALLIATVMLALIILAINYAIAMIVAPQYAIYGTQTFCVNAPRHPGEQPDCREHRDMVRPCSEVFSEPAAKDVCTPTVMSTFLNRVTINWPVFGAIDFWAQFAFLGVFMVVFVTSLFRTPRLNLSELDEEAEVDEEEGLLASTGRRFGATWGDITGRAKNRNGYGTGGGEGSNGRG</sequence>
<comment type="function">
    <text evidence="1">Probable lysosomal cobalamin transporter. Required to export cobalamin from lysosomes allowing its conversion to cofactors (By similarity).</text>
</comment>
<comment type="subcellular location">
    <subcellularLocation>
        <location evidence="1">Lysosome membrane</location>
        <topology evidence="1">Multi-pass membrane protein</topology>
    </subcellularLocation>
</comment>
<comment type="similarity">
    <text evidence="4">Belongs to the LIMR family. LMBRD1 subfamily.</text>
</comment>
<name>LMBD1_PODAN</name>
<accession>B2AA26</accession>
<accession>A0A090CBS9</accession>
<gene>
    <name type="ordered locus">Pa_1_2600</name>
    <name type="ORF">PODANS_1_2600</name>
</gene>
<proteinExistence type="inferred from homology"/>
<evidence type="ECO:0000250" key="1"/>
<evidence type="ECO:0000255" key="2"/>
<evidence type="ECO:0000256" key="3">
    <source>
        <dbReference type="SAM" id="MobiDB-lite"/>
    </source>
</evidence>
<evidence type="ECO:0000305" key="4"/>
<keyword id="KW-0846">Cobalamin</keyword>
<keyword id="KW-0170">Cobalt</keyword>
<keyword id="KW-0325">Glycoprotein</keyword>
<keyword id="KW-0458">Lysosome</keyword>
<keyword id="KW-0472">Membrane</keyword>
<keyword id="KW-1185">Reference proteome</keyword>
<keyword id="KW-0812">Transmembrane</keyword>
<keyword id="KW-1133">Transmembrane helix</keyword>
<keyword id="KW-0813">Transport</keyword>
<feature type="chain" id="PRO_0000365837" description="Probable lysosomal cobalamin transporter">
    <location>
        <begin position="1"/>
        <end position="596"/>
    </location>
</feature>
<feature type="transmembrane region" description="Helical" evidence="2">
    <location>
        <begin position="13"/>
        <end position="33"/>
    </location>
</feature>
<feature type="transmembrane region" description="Helical" evidence="2">
    <location>
        <begin position="45"/>
        <end position="65"/>
    </location>
</feature>
<feature type="transmembrane region" description="Helical" evidence="2">
    <location>
        <begin position="99"/>
        <end position="119"/>
    </location>
</feature>
<feature type="transmembrane region" description="Helical" evidence="2">
    <location>
        <begin position="150"/>
        <end position="170"/>
    </location>
</feature>
<feature type="transmembrane region" description="Helical" evidence="2">
    <location>
        <begin position="201"/>
        <end position="221"/>
    </location>
</feature>
<feature type="transmembrane region" description="Helical" evidence="2">
    <location>
        <begin position="318"/>
        <end position="338"/>
    </location>
</feature>
<feature type="transmembrane region" description="Helical" evidence="2">
    <location>
        <begin position="353"/>
        <end position="373"/>
    </location>
</feature>
<feature type="transmembrane region" description="Helical" evidence="2">
    <location>
        <begin position="381"/>
        <end position="401"/>
    </location>
</feature>
<feature type="transmembrane region" description="Helical" evidence="2">
    <location>
        <begin position="425"/>
        <end position="445"/>
    </location>
</feature>
<feature type="transmembrane region" description="Helical" evidence="2">
    <location>
        <begin position="512"/>
        <end position="532"/>
    </location>
</feature>
<feature type="region of interest" description="Disordered" evidence="3">
    <location>
        <begin position="576"/>
        <end position="596"/>
    </location>
</feature>
<feature type="compositionally biased region" description="Gly residues" evidence="3">
    <location>
        <begin position="584"/>
        <end position="596"/>
    </location>
</feature>
<feature type="glycosylation site" description="N-linked (GlcNAc...) asparagine" evidence="2">
    <location>
        <position position="543"/>
    </location>
</feature>
<organism>
    <name type="scientific">Podospora anserina (strain S / ATCC MYA-4624 / DSM 980 / FGSC 10383)</name>
    <name type="common">Pleurage anserina</name>
    <dbReference type="NCBI Taxonomy" id="515849"/>
    <lineage>
        <taxon>Eukaryota</taxon>
        <taxon>Fungi</taxon>
        <taxon>Dikarya</taxon>
        <taxon>Ascomycota</taxon>
        <taxon>Pezizomycotina</taxon>
        <taxon>Sordariomycetes</taxon>
        <taxon>Sordariomycetidae</taxon>
        <taxon>Sordariales</taxon>
        <taxon>Podosporaceae</taxon>
        <taxon>Podospora</taxon>
        <taxon>Podospora anserina</taxon>
    </lineage>
</organism>
<dbReference type="EMBL" id="CU633438">
    <property type="protein sequence ID" value="CAP59937.1"/>
    <property type="molecule type" value="Genomic_DNA"/>
</dbReference>
<dbReference type="EMBL" id="FO904936">
    <property type="protein sequence ID" value="CDP22579.1"/>
    <property type="molecule type" value="Genomic_DNA"/>
</dbReference>
<dbReference type="RefSeq" id="XP_001912456.1">
    <property type="nucleotide sequence ID" value="XM_001912421.1"/>
</dbReference>
<dbReference type="SMR" id="B2AA26"/>
<dbReference type="STRING" id="515849.B2AA26"/>
<dbReference type="GeneID" id="6196704"/>
<dbReference type="KEGG" id="pan:PODANSg09504"/>
<dbReference type="VEuPathDB" id="FungiDB:PODANS_1_2600"/>
<dbReference type="eggNOG" id="ENOG502QQ2T">
    <property type="taxonomic scope" value="Eukaryota"/>
</dbReference>
<dbReference type="HOGENOM" id="CLU_028341_1_0_1"/>
<dbReference type="InParanoid" id="B2AA26"/>
<dbReference type="OrthoDB" id="73273at2759"/>
<dbReference type="Proteomes" id="UP000001197">
    <property type="component" value="Chromosome 1"/>
</dbReference>
<dbReference type="GO" id="GO:0005774">
    <property type="term" value="C:vacuolar membrane"/>
    <property type="evidence" value="ECO:0007669"/>
    <property type="project" value="TreeGrafter"/>
</dbReference>
<dbReference type="GO" id="GO:0031419">
    <property type="term" value="F:cobalamin binding"/>
    <property type="evidence" value="ECO:0007669"/>
    <property type="project" value="UniProtKB-KW"/>
</dbReference>
<dbReference type="GO" id="GO:0072665">
    <property type="term" value="P:protein localization to vacuole"/>
    <property type="evidence" value="ECO:0007669"/>
    <property type="project" value="TreeGrafter"/>
</dbReference>
<dbReference type="InterPro" id="IPR050854">
    <property type="entry name" value="LMBD1_LysCbl_Transport"/>
</dbReference>
<dbReference type="InterPro" id="IPR006876">
    <property type="entry name" value="LMBR1-like_membr_prot"/>
</dbReference>
<dbReference type="PANTHER" id="PTHR16130:SF2">
    <property type="entry name" value="LYSOSOMAL COBALAMIN TRANSPORT ESCORT PROTEIN LMBD1"/>
    <property type="match status" value="1"/>
</dbReference>
<dbReference type="PANTHER" id="PTHR16130">
    <property type="entry name" value="LYSOSOMAL COBALAMIN TRANSPORTER-RELATED"/>
    <property type="match status" value="1"/>
</dbReference>
<dbReference type="Pfam" id="PF04791">
    <property type="entry name" value="LMBR1"/>
    <property type="match status" value="1"/>
</dbReference>